<proteinExistence type="evidence at transcript level"/>
<name>PSBQ1_MAIZE</name>
<accession>Q41048</accession>
<feature type="transit peptide" description="Chloroplast">
    <location>
        <begin position="1"/>
        <end position="68"/>
    </location>
</feature>
<feature type="chain" id="PRO_0000029592" description="Oxygen-evolving enhancer protein 3-1, chloroplastic">
    <location>
        <begin position="69"/>
        <end position="217"/>
    </location>
</feature>
<sequence length="217" mass="23133">MAQAMASMTGLSQGVLPSRRADSRTRTAVVIVRASAEGDAVAQAGRRAVIGLVATGIVGGALSQAARAETVKTIKIGAPPPPSGGLPGTLNSDQARDFDLPLKERFYLQPLPPAEAAARVKTSAQDIINLKPLIDKKAWPYVQNDLRLRASYLRYDLKTVIASKPKEEKKSLKELTGKLFSTIDDLDHAAKIKSTPEAEKYFAATKDALGDVLAKLG</sequence>
<comment type="subcellular location">
    <subcellularLocation>
        <location>Plastid</location>
        <location>Chloroplast thylakoid membrane</location>
    </subcellularLocation>
    <text>Associated with the photosystem II complex.</text>
</comment>
<comment type="similarity">
    <text evidence="1">Belongs to the PsbQ family.</text>
</comment>
<comment type="caution">
    <text evidence="2">Was originally thought to originate from pea.</text>
</comment>
<organism>
    <name type="scientific">Zea mays</name>
    <name type="common">Maize</name>
    <dbReference type="NCBI Taxonomy" id="4577"/>
    <lineage>
        <taxon>Eukaryota</taxon>
        <taxon>Viridiplantae</taxon>
        <taxon>Streptophyta</taxon>
        <taxon>Embryophyta</taxon>
        <taxon>Tracheophyta</taxon>
        <taxon>Spermatophyta</taxon>
        <taxon>Magnoliopsida</taxon>
        <taxon>Liliopsida</taxon>
        <taxon>Poales</taxon>
        <taxon>Poaceae</taxon>
        <taxon>PACMAD clade</taxon>
        <taxon>Panicoideae</taxon>
        <taxon>Andropogonodae</taxon>
        <taxon>Andropogoneae</taxon>
        <taxon>Tripsacinae</taxon>
        <taxon>Zea</taxon>
    </lineage>
</organism>
<evidence type="ECO:0000305" key="1"/>
<evidence type="ECO:0000305" key="2">
    <source>
    </source>
</evidence>
<protein>
    <recommendedName>
        <fullName>Oxygen-evolving enhancer protein 3-1, chloroplastic</fullName>
        <shortName>OEE3</shortName>
    </recommendedName>
    <alternativeName>
        <fullName>16 kDa subunit of oxygen evolving system of photosystem II</fullName>
    </alternativeName>
    <alternativeName>
        <fullName>OEC 16 kDa subunit</fullName>
    </alternativeName>
</protein>
<gene>
    <name type="primary">PSBQ1</name>
    <name type="synonym">PSBQ</name>
</gene>
<reference key="1">
    <citation type="journal article" date="1992" name="Plant Physiol.">
        <title>Sequence of the cDNA encoding the 17 kDa protein of the oxygen-evolving complex of pea.</title>
        <authorList>
            <person name="Ettinger W.F."/>
            <person name="Theg S.M."/>
        </authorList>
    </citation>
    <scope>NUCLEOTIDE SEQUENCE [MRNA]</scope>
    <source>
        <tissue>Leaf</tissue>
    </source>
</reference>
<keyword id="KW-0150">Chloroplast</keyword>
<keyword id="KW-0472">Membrane</keyword>
<keyword id="KW-0602">Photosynthesis</keyword>
<keyword id="KW-0604">Photosystem II</keyword>
<keyword id="KW-0934">Plastid</keyword>
<keyword id="KW-1185">Reference proteome</keyword>
<keyword id="KW-0793">Thylakoid</keyword>
<keyword id="KW-0809">Transit peptide</keyword>
<dbReference type="EMBL" id="M87435">
    <property type="protein sequence ID" value="AAA20823.1"/>
    <property type="molecule type" value="mRNA"/>
</dbReference>
<dbReference type="PIR" id="T01747">
    <property type="entry name" value="T01747"/>
</dbReference>
<dbReference type="RefSeq" id="NP_001105348.1">
    <property type="nucleotide sequence ID" value="NM_001111878.1"/>
</dbReference>
<dbReference type="RefSeq" id="NP_001311123.1">
    <property type="nucleotide sequence ID" value="NM_001324194.1"/>
</dbReference>
<dbReference type="SMR" id="Q41048"/>
<dbReference type="FunCoup" id="Q41048">
    <property type="interactions" value="2782"/>
</dbReference>
<dbReference type="STRING" id="4577.Q41048"/>
<dbReference type="PaxDb" id="4577-GRMZM2G021617_P01"/>
<dbReference type="EnsemblPlants" id="Zm00001eb323460_T001">
    <property type="protein sequence ID" value="Zm00001eb323460_P001"/>
    <property type="gene ID" value="Zm00001eb323460"/>
</dbReference>
<dbReference type="GeneID" id="542279"/>
<dbReference type="Gramene" id="Zm00001eb323460_T001">
    <property type="protein sequence ID" value="Zm00001eb323460_P001"/>
    <property type="gene ID" value="Zm00001eb323460"/>
</dbReference>
<dbReference type="KEGG" id="zma:542279"/>
<dbReference type="eggNOG" id="ENOG502QQF9">
    <property type="taxonomic scope" value="Eukaryota"/>
</dbReference>
<dbReference type="HOGENOM" id="CLU_085524_0_0_1"/>
<dbReference type="InParanoid" id="Q41048"/>
<dbReference type="OMA" id="LFMAISN"/>
<dbReference type="OrthoDB" id="497707at2759"/>
<dbReference type="Proteomes" id="UP000007305">
    <property type="component" value="Chromosome 7"/>
</dbReference>
<dbReference type="ExpressionAtlas" id="Q41048">
    <property type="expression patterns" value="baseline and differential"/>
</dbReference>
<dbReference type="GO" id="GO:0009507">
    <property type="term" value="C:chloroplast"/>
    <property type="evidence" value="ECO:0000318"/>
    <property type="project" value="GO_Central"/>
</dbReference>
<dbReference type="GO" id="GO:0009535">
    <property type="term" value="C:chloroplast thylakoid membrane"/>
    <property type="evidence" value="ECO:0007669"/>
    <property type="project" value="UniProtKB-SubCell"/>
</dbReference>
<dbReference type="GO" id="GO:0019898">
    <property type="term" value="C:extrinsic component of membrane"/>
    <property type="evidence" value="ECO:0007669"/>
    <property type="project" value="InterPro"/>
</dbReference>
<dbReference type="GO" id="GO:0009654">
    <property type="term" value="C:photosystem II oxygen evolving complex"/>
    <property type="evidence" value="ECO:0007669"/>
    <property type="project" value="InterPro"/>
</dbReference>
<dbReference type="GO" id="GO:0005509">
    <property type="term" value="F:calcium ion binding"/>
    <property type="evidence" value="ECO:0007669"/>
    <property type="project" value="InterPro"/>
</dbReference>
<dbReference type="GO" id="GO:0045156">
    <property type="term" value="F:electron transporter, transferring electrons within the cyclic electron transport pathway of photosynthesis activity"/>
    <property type="evidence" value="ECO:0000318"/>
    <property type="project" value="GO_Central"/>
</dbReference>
<dbReference type="GO" id="GO:0009767">
    <property type="term" value="P:photosynthetic electron transport chain"/>
    <property type="evidence" value="ECO:0000318"/>
    <property type="project" value="GO_Central"/>
</dbReference>
<dbReference type="FunFam" id="1.20.120.290:FF:000001">
    <property type="entry name" value="Oxygen-evolving enhancer protein 3"/>
    <property type="match status" value="1"/>
</dbReference>
<dbReference type="Gene3D" id="1.20.120.290">
    <property type="entry name" value="Oxygen-evolving enhancer protein 3 (PsbQ), four-helix up-down bundle"/>
    <property type="match status" value="1"/>
</dbReference>
<dbReference type="InterPro" id="IPR023222">
    <property type="entry name" value="PsbQ-like_dom_sf"/>
</dbReference>
<dbReference type="InterPro" id="IPR008797">
    <property type="entry name" value="PSII_PsbQ"/>
</dbReference>
<dbReference type="InterPro" id="IPR054099">
    <property type="entry name" value="PSII_PsbQ_pln"/>
</dbReference>
<dbReference type="PANTHER" id="PTHR33399">
    <property type="entry name" value="OXYGEN-EVOLVING ENHANCER PROTEIN 3-1, CHLOROPLASTIC"/>
    <property type="match status" value="1"/>
</dbReference>
<dbReference type="PANTHER" id="PTHR33399:SF3">
    <property type="entry name" value="OXYGEN-EVOLVING ENHANCER PROTEIN 3-1, CHLOROPLASTIC"/>
    <property type="match status" value="1"/>
</dbReference>
<dbReference type="Pfam" id="PF05757">
    <property type="entry name" value="PsbQ"/>
    <property type="match status" value="1"/>
</dbReference>
<dbReference type="SUPFAM" id="SSF101112">
    <property type="entry name" value="Oxygen-evolving enhancer protein 3"/>
    <property type="match status" value="1"/>
</dbReference>